<accession>Q59MP1</accession>
<gene>
    <name evidence="1" type="primary">NBP35</name>
    <name type="ordered locus">CAALFM_C405170CA</name>
    <name type="ORF">CaO19.747</name>
</gene>
<proteinExistence type="inferred from homology"/>
<keyword id="KW-0004">4Fe-4S</keyword>
<keyword id="KW-0067">ATP-binding</keyword>
<keyword id="KW-0963">Cytoplasm</keyword>
<keyword id="KW-0408">Iron</keyword>
<keyword id="KW-0411">Iron-sulfur</keyword>
<keyword id="KW-0479">Metal-binding</keyword>
<keyword id="KW-0547">Nucleotide-binding</keyword>
<keyword id="KW-0539">Nucleus</keyword>
<keyword id="KW-1185">Reference proteome</keyword>
<dbReference type="EMBL" id="CP017626">
    <property type="status" value="NOT_ANNOTATED_CDS"/>
    <property type="molecule type" value="Genomic_DNA"/>
</dbReference>
<dbReference type="SMR" id="Q59MP1"/>
<dbReference type="FunCoup" id="Q59MP1">
    <property type="interactions" value="608"/>
</dbReference>
<dbReference type="STRING" id="237561.Q59MP1"/>
<dbReference type="PeptideAtlas" id="Q59MP1"/>
<dbReference type="eggNOG" id="KOG3022">
    <property type="taxonomic scope" value="Eukaryota"/>
</dbReference>
<dbReference type="HOGENOM" id="CLU_024839_0_1_1"/>
<dbReference type="InParanoid" id="Q59MP1"/>
<dbReference type="Proteomes" id="UP000000559">
    <property type="component" value="Chromosome 4"/>
</dbReference>
<dbReference type="GO" id="GO:0005829">
    <property type="term" value="C:cytosol"/>
    <property type="evidence" value="ECO:0000318"/>
    <property type="project" value="GO_Central"/>
</dbReference>
<dbReference type="GO" id="GO:0005634">
    <property type="term" value="C:nucleus"/>
    <property type="evidence" value="ECO:0007669"/>
    <property type="project" value="UniProtKB-SubCell"/>
</dbReference>
<dbReference type="GO" id="GO:0051539">
    <property type="term" value="F:4 iron, 4 sulfur cluster binding"/>
    <property type="evidence" value="ECO:0007669"/>
    <property type="project" value="UniProtKB-UniRule"/>
</dbReference>
<dbReference type="GO" id="GO:0005524">
    <property type="term" value="F:ATP binding"/>
    <property type="evidence" value="ECO:0007669"/>
    <property type="project" value="UniProtKB-KW"/>
</dbReference>
<dbReference type="GO" id="GO:0140663">
    <property type="term" value="F:ATP-dependent FeS chaperone activity"/>
    <property type="evidence" value="ECO:0007669"/>
    <property type="project" value="InterPro"/>
</dbReference>
<dbReference type="GO" id="GO:0051536">
    <property type="term" value="F:iron-sulfur cluster binding"/>
    <property type="evidence" value="ECO:0000318"/>
    <property type="project" value="GO_Central"/>
</dbReference>
<dbReference type="GO" id="GO:0046872">
    <property type="term" value="F:metal ion binding"/>
    <property type="evidence" value="ECO:0007669"/>
    <property type="project" value="UniProtKB-KW"/>
</dbReference>
<dbReference type="GO" id="GO:0016226">
    <property type="term" value="P:iron-sulfur cluster assembly"/>
    <property type="evidence" value="ECO:0000318"/>
    <property type="project" value="GO_Central"/>
</dbReference>
<dbReference type="CDD" id="cd02037">
    <property type="entry name" value="Mrp_NBP35"/>
    <property type="match status" value="1"/>
</dbReference>
<dbReference type="FunFam" id="3.40.50.300:FF:000427">
    <property type="entry name" value="Cytosolic Fe-S cluster assembly factor NUBP1"/>
    <property type="match status" value="1"/>
</dbReference>
<dbReference type="Gene3D" id="3.40.50.300">
    <property type="entry name" value="P-loop containing nucleotide triphosphate hydrolases"/>
    <property type="match status" value="1"/>
</dbReference>
<dbReference type="HAMAP" id="MF_02040">
    <property type="entry name" value="Mrp_NBP35"/>
    <property type="match status" value="1"/>
</dbReference>
<dbReference type="HAMAP" id="MF_03038">
    <property type="entry name" value="NUBP1"/>
    <property type="match status" value="1"/>
</dbReference>
<dbReference type="InterPro" id="IPR019591">
    <property type="entry name" value="Mrp/NBP35_ATP-bd"/>
</dbReference>
<dbReference type="InterPro" id="IPR028601">
    <property type="entry name" value="NUBP1/Nbp35"/>
</dbReference>
<dbReference type="InterPro" id="IPR027417">
    <property type="entry name" value="P-loop_NTPase"/>
</dbReference>
<dbReference type="InterPro" id="IPR033756">
    <property type="entry name" value="YlxH/NBP35"/>
</dbReference>
<dbReference type="PANTHER" id="PTHR23264:SF35">
    <property type="entry name" value="CYTOSOLIC FE-S CLUSTER ASSEMBLY FACTOR NUBP1"/>
    <property type="match status" value="1"/>
</dbReference>
<dbReference type="PANTHER" id="PTHR23264">
    <property type="entry name" value="NUCLEOTIDE-BINDING PROTEIN NBP35 YEAST -RELATED"/>
    <property type="match status" value="1"/>
</dbReference>
<dbReference type="Pfam" id="PF10609">
    <property type="entry name" value="ParA"/>
    <property type="match status" value="1"/>
</dbReference>
<dbReference type="SUPFAM" id="SSF52540">
    <property type="entry name" value="P-loop containing nucleoside triphosphate hydrolases"/>
    <property type="match status" value="1"/>
</dbReference>
<protein>
    <recommendedName>
        <fullName evidence="1">Cytosolic Fe-S cluster assembly factor NBP35</fullName>
    </recommendedName>
    <alternativeName>
        <fullName evidence="1">Nucleotide-binding protein 35</fullName>
    </alternativeName>
</protein>
<organism>
    <name type="scientific">Candida albicans (strain SC5314 / ATCC MYA-2876)</name>
    <name type="common">Yeast</name>
    <dbReference type="NCBI Taxonomy" id="237561"/>
    <lineage>
        <taxon>Eukaryota</taxon>
        <taxon>Fungi</taxon>
        <taxon>Dikarya</taxon>
        <taxon>Ascomycota</taxon>
        <taxon>Saccharomycotina</taxon>
        <taxon>Pichiomycetes</taxon>
        <taxon>Debaryomycetaceae</taxon>
        <taxon>Candida/Lodderomyces clade</taxon>
        <taxon>Candida</taxon>
    </lineage>
</organism>
<sequence length="331" mass="35381">MSPSQTQIEKSQLAAPEPEHCPGPESELAGQGDACKGCANQEICSSQTVKGPDPDLPIITERLSAIDHKILVLSGKGGVGKSTFTSMLAWAIAADEEIEVGAMDLDICGPSLPRMLGAEGESVHQSNSGWSPVYVADNLGLMSISFMLPDPDSAIIWRGAKKNGLIKQFLKDVNWGEKLDYLVVDTPPGTSDEHLSVTTYMKEVGIDGALIVTTPQEVALLDVRKEIDFCRKANIKILGLVENMSGFVCPNCKGESQIFKATTGGGKRLCEELGIPFLGSVPLDPRIGKACDMGECFFDSYPDSPAATAILDVVDALRDQVELSLENLAIK</sequence>
<evidence type="ECO:0000255" key="1">
    <source>
        <dbReference type="HAMAP-Rule" id="MF_03038"/>
    </source>
</evidence>
<evidence type="ECO:0000256" key="2">
    <source>
        <dbReference type="SAM" id="MobiDB-lite"/>
    </source>
</evidence>
<comment type="function">
    <text evidence="1">Component of the cytosolic iron-sulfur (Fe/S) protein assembly (CIA) machinery. Required for maturation of extramitochondrial Fe-S proteins. The NBP35-CFD1 heterotetramer forms a Fe-S scaffold complex, mediating the de novo assembly of an Fe-S cluster and its transfer to target apoproteins. Required for biogenesis and export of both ribosomal subunits, which may reflect a role in assembly of the Fe/S clusters in RLI1, a protein which performs rRNA processing and ribosome export.</text>
</comment>
<comment type="cofactor">
    <cofactor evidence="1">
        <name>[4Fe-4S] cluster</name>
        <dbReference type="ChEBI" id="CHEBI:49883"/>
    </cofactor>
    <text evidence="1">Binds 4 [4Fe-4S] clusters per heterotetramer. Contains two stable clusters in the N-termini of NBP35 and two labile, bridging clusters between subunits of the NBP35-CFD1 heterotetramer.</text>
</comment>
<comment type="subunit">
    <text evidence="1">Heterotetramer of 2 NBP35 and 2 CFD1 chains.</text>
</comment>
<comment type="subcellular location">
    <subcellularLocation>
        <location evidence="1">Cytoplasm</location>
    </subcellularLocation>
    <subcellularLocation>
        <location evidence="1">Nucleus</location>
    </subcellularLocation>
</comment>
<comment type="similarity">
    <text evidence="1">Belongs to the Mrp/NBP35 ATP-binding proteins family. NUBP1/NBP35 subfamily.</text>
</comment>
<name>NBP35_CANAL</name>
<feature type="chain" id="PRO_0000278891" description="Cytosolic Fe-S cluster assembly factor NBP35">
    <location>
        <begin position="1"/>
        <end position="331"/>
    </location>
</feature>
<feature type="region of interest" description="Disordered" evidence="2">
    <location>
        <begin position="1"/>
        <end position="32"/>
    </location>
</feature>
<feature type="compositionally biased region" description="Polar residues" evidence="2">
    <location>
        <begin position="1"/>
        <end position="10"/>
    </location>
</feature>
<feature type="binding site" evidence="1">
    <location>
        <position position="21"/>
    </location>
    <ligand>
        <name>[4Fe-4S] cluster</name>
        <dbReference type="ChEBI" id="CHEBI:49883"/>
        <label>1</label>
    </ligand>
</feature>
<feature type="binding site" evidence="1">
    <location>
        <position position="35"/>
    </location>
    <ligand>
        <name>[4Fe-4S] cluster</name>
        <dbReference type="ChEBI" id="CHEBI:49883"/>
        <label>1</label>
    </ligand>
</feature>
<feature type="binding site" evidence="1">
    <location>
        <position position="38"/>
    </location>
    <ligand>
        <name>[4Fe-4S] cluster</name>
        <dbReference type="ChEBI" id="CHEBI:49883"/>
        <label>1</label>
    </ligand>
</feature>
<feature type="binding site" evidence="1">
    <location>
        <position position="44"/>
    </location>
    <ligand>
        <name>[4Fe-4S] cluster</name>
        <dbReference type="ChEBI" id="CHEBI:49883"/>
        <label>1</label>
    </ligand>
</feature>
<feature type="binding site" evidence="1">
    <location>
        <begin position="75"/>
        <end position="82"/>
    </location>
    <ligand>
        <name>ATP</name>
        <dbReference type="ChEBI" id="CHEBI:30616"/>
    </ligand>
</feature>
<feature type="binding site" evidence="1">
    <location>
        <position position="249"/>
    </location>
    <ligand>
        <name>[4Fe-4S] cluster</name>
        <dbReference type="ChEBI" id="CHEBI:49883"/>
        <label>2</label>
        <note>ligand shared with heterodimeric partner</note>
    </ligand>
</feature>
<feature type="binding site" evidence="1">
    <location>
        <position position="252"/>
    </location>
    <ligand>
        <name>[4Fe-4S] cluster</name>
        <dbReference type="ChEBI" id="CHEBI:49883"/>
        <label>2</label>
        <note>ligand shared with heterodimeric partner</note>
    </ligand>
</feature>
<reference key="1">
    <citation type="journal article" date="2004" name="Proc. Natl. Acad. Sci. U.S.A.">
        <title>The diploid genome sequence of Candida albicans.</title>
        <authorList>
            <person name="Jones T."/>
            <person name="Federspiel N.A."/>
            <person name="Chibana H."/>
            <person name="Dungan J."/>
            <person name="Kalman S."/>
            <person name="Magee B.B."/>
            <person name="Newport G."/>
            <person name="Thorstenson Y.R."/>
            <person name="Agabian N."/>
            <person name="Magee P.T."/>
            <person name="Davis R.W."/>
            <person name="Scherer S."/>
        </authorList>
    </citation>
    <scope>NUCLEOTIDE SEQUENCE [LARGE SCALE GENOMIC DNA]</scope>
    <source>
        <strain>SC5314 / ATCC MYA-2876</strain>
    </source>
</reference>
<reference key="2">
    <citation type="journal article" date="2007" name="Genome Biol.">
        <title>Assembly of the Candida albicans genome into sixteen supercontigs aligned on the eight chromosomes.</title>
        <authorList>
            <person name="van het Hoog M."/>
            <person name="Rast T.J."/>
            <person name="Martchenko M."/>
            <person name="Grindle S."/>
            <person name="Dignard D."/>
            <person name="Hogues H."/>
            <person name="Cuomo C."/>
            <person name="Berriman M."/>
            <person name="Scherer S."/>
            <person name="Magee B.B."/>
            <person name="Whiteway M."/>
            <person name="Chibana H."/>
            <person name="Nantel A."/>
            <person name="Magee P.T."/>
        </authorList>
    </citation>
    <scope>GENOME REANNOTATION</scope>
    <source>
        <strain>SC5314 / ATCC MYA-2876</strain>
    </source>
</reference>
<reference key="3">
    <citation type="journal article" date="2013" name="Genome Biol.">
        <title>Assembly of a phased diploid Candida albicans genome facilitates allele-specific measurements and provides a simple model for repeat and indel structure.</title>
        <authorList>
            <person name="Muzzey D."/>
            <person name="Schwartz K."/>
            <person name="Weissman J.S."/>
            <person name="Sherlock G."/>
        </authorList>
    </citation>
    <scope>NUCLEOTIDE SEQUENCE [LARGE SCALE GENOMIC DNA]</scope>
    <scope>GENOME REANNOTATION</scope>
    <source>
        <strain>SC5314 / ATCC MYA-2876</strain>
    </source>
</reference>